<evidence type="ECO:0000250" key="1">
    <source>
        <dbReference type="UniProtKB" id="E1QU22"/>
    </source>
</evidence>
<evidence type="ECO:0000250" key="2">
    <source>
        <dbReference type="UniProtKB" id="Q12094"/>
    </source>
</evidence>
<evidence type="ECO:0000250" key="3">
    <source>
        <dbReference type="UniProtKB" id="Q5HZH2"/>
    </source>
</evidence>
<evidence type="ECO:0000255" key="4">
    <source>
        <dbReference type="HAMAP-Rule" id="MF_03146"/>
    </source>
</evidence>
<evidence type="ECO:0000256" key="5">
    <source>
        <dbReference type="SAM" id="MobiDB-lite"/>
    </source>
</evidence>
<evidence type="ECO:0000303" key="6">
    <source>
    </source>
</evidence>
<evidence type="ECO:0000303" key="7">
    <source>
    </source>
</evidence>
<evidence type="ECO:0000305" key="8"/>
<evidence type="ECO:0000305" key="9">
    <source>
    </source>
</evidence>
<evidence type="ECO:0000312" key="10">
    <source>
        <dbReference type="HGNC" id="HGNC:14175"/>
    </source>
</evidence>
<evidence type="ECO:0007744" key="11">
    <source>
    </source>
</evidence>
<evidence type="ECO:0007744" key="12">
    <source>
    </source>
</evidence>
<feature type="chain" id="PRO_0000278669" description="18S rRNA aminocarboxypropyltransferase">
    <location>
        <begin position="1"/>
        <end position="312"/>
    </location>
</feature>
<feature type="region of interest" description="Disordered" evidence="5">
    <location>
        <begin position="1"/>
        <end position="21"/>
    </location>
</feature>
<feature type="region of interest" description="Disordered" evidence="5">
    <location>
        <begin position="224"/>
        <end position="312"/>
    </location>
</feature>
<feature type="binding site" evidence="1">
    <location>
        <position position="74"/>
    </location>
    <ligand>
        <name>S-adenosyl-L-methionine</name>
        <dbReference type="ChEBI" id="CHEBI:59789"/>
    </ligand>
</feature>
<feature type="binding site" evidence="1">
    <location>
        <position position="122"/>
    </location>
    <ligand>
        <name>S-adenosyl-L-methionine</name>
        <dbReference type="ChEBI" id="CHEBI:59789"/>
    </ligand>
</feature>
<feature type="binding site" evidence="1">
    <location>
        <position position="145"/>
    </location>
    <ligand>
        <name>S-adenosyl-L-methionine</name>
        <dbReference type="ChEBI" id="CHEBI:59789"/>
    </ligand>
</feature>
<feature type="binding site" evidence="1">
    <location>
        <position position="160"/>
    </location>
    <ligand>
        <name>S-adenosyl-L-methionine</name>
        <dbReference type="ChEBI" id="CHEBI:59789"/>
    </ligand>
</feature>
<feature type="modified residue" description="Phosphoserine" evidence="3">
    <location>
        <position position="24"/>
    </location>
</feature>
<feature type="modified residue" description="Phosphoserine" evidence="12">
    <location>
        <position position="259"/>
    </location>
</feature>
<feature type="modified residue" description="Phosphothreonine" evidence="12">
    <location>
        <position position="261"/>
    </location>
</feature>
<feature type="modified residue" description="Phosphoserine" evidence="12">
    <location>
        <position position="264"/>
    </location>
</feature>
<feature type="modified residue" description="Phosphoserine" evidence="11">
    <location>
        <position position="282"/>
    </location>
</feature>
<organism>
    <name type="scientific">Homo sapiens</name>
    <name type="common">Human</name>
    <dbReference type="NCBI Taxonomy" id="9606"/>
    <lineage>
        <taxon>Eukaryota</taxon>
        <taxon>Metazoa</taxon>
        <taxon>Chordata</taxon>
        <taxon>Craniata</taxon>
        <taxon>Vertebrata</taxon>
        <taxon>Euteleostomi</taxon>
        <taxon>Mammalia</taxon>
        <taxon>Eutheria</taxon>
        <taxon>Euarchontoglires</taxon>
        <taxon>Primates</taxon>
        <taxon>Haplorrhini</taxon>
        <taxon>Catarrhini</taxon>
        <taxon>Hominidae</taxon>
        <taxon>Homo</taxon>
    </lineage>
</organism>
<sequence length="312" mass="33596">MGRRRAARGPGAEGGRPRHLPTRSLEAFAEEVGAALQASVEPGAADGEGGPGPAALPCTLAMWELGHCDPRRCTGRKLARLGLVRCLRLGHRFGGLVLSPVGKQYASPADRQLVAQSGVAVIDCSWARLDETPFGKMRGSHLRLLPYLVAANPVNYGRPYRLSCVEAFAATFCIVGFPDLAVILLRKFKWGKGFLDLNRQLLDKYAACGSPEEVLQAEQEFLANAKESPQEEEIDPFDVDSGREFGNPNRPVASTRLPSDTDDSDASEDPGPGAERGGASSSCCEEEQTQGRGAEARAPAEVWKGIKKRQRD</sequence>
<gene>
    <name evidence="7 10" type="primary">TSR3</name>
    <name evidence="10" type="synonym">C16orf42</name>
    <name evidence="6" type="synonym">UND313L</name>
</gene>
<name>TSR3_HUMAN</name>
<reference key="1">
    <citation type="journal article" date="2001" name="Hum. Mol. Genet.">
        <title>Sequence, structure and pathology of the fully annotated terminal 2 Mb of the short arm of human chromosome 16.</title>
        <authorList>
            <person name="Daniels R.J."/>
            <person name="Peden J.F."/>
            <person name="Lloyd C."/>
            <person name="Horsley S.W."/>
            <person name="Clark K."/>
            <person name="Tufarelli C."/>
            <person name="Kearney L."/>
            <person name="Buckle V.J."/>
            <person name="Doggett N.A."/>
            <person name="Flint J."/>
            <person name="Higgs D.R."/>
        </authorList>
    </citation>
    <scope>NUCLEOTIDE SEQUENCE [LARGE SCALE GENOMIC DNA]</scope>
</reference>
<reference key="2">
    <citation type="journal article" date="2004" name="Nature">
        <title>The sequence and analysis of duplication-rich human chromosome 16.</title>
        <authorList>
            <person name="Martin J."/>
            <person name="Han C."/>
            <person name="Gordon L.A."/>
            <person name="Terry A."/>
            <person name="Prabhakar S."/>
            <person name="She X."/>
            <person name="Xie G."/>
            <person name="Hellsten U."/>
            <person name="Chan Y.M."/>
            <person name="Altherr M."/>
            <person name="Couronne O."/>
            <person name="Aerts A."/>
            <person name="Bajorek E."/>
            <person name="Black S."/>
            <person name="Blumer H."/>
            <person name="Branscomb E."/>
            <person name="Brown N.C."/>
            <person name="Bruno W.J."/>
            <person name="Buckingham J.M."/>
            <person name="Callen D.F."/>
            <person name="Campbell C.S."/>
            <person name="Campbell M.L."/>
            <person name="Campbell E.W."/>
            <person name="Caoile C."/>
            <person name="Challacombe J.F."/>
            <person name="Chasteen L.A."/>
            <person name="Chertkov O."/>
            <person name="Chi H.C."/>
            <person name="Christensen M."/>
            <person name="Clark L.M."/>
            <person name="Cohn J.D."/>
            <person name="Denys M."/>
            <person name="Detter J.C."/>
            <person name="Dickson M."/>
            <person name="Dimitrijevic-Bussod M."/>
            <person name="Escobar J."/>
            <person name="Fawcett J.J."/>
            <person name="Flowers D."/>
            <person name="Fotopulos D."/>
            <person name="Glavina T."/>
            <person name="Gomez M."/>
            <person name="Gonzales E."/>
            <person name="Goodstein D."/>
            <person name="Goodwin L.A."/>
            <person name="Grady D.L."/>
            <person name="Grigoriev I."/>
            <person name="Groza M."/>
            <person name="Hammon N."/>
            <person name="Hawkins T."/>
            <person name="Haydu L."/>
            <person name="Hildebrand C.E."/>
            <person name="Huang W."/>
            <person name="Israni S."/>
            <person name="Jett J."/>
            <person name="Jewett P.B."/>
            <person name="Kadner K."/>
            <person name="Kimball H."/>
            <person name="Kobayashi A."/>
            <person name="Krawczyk M.-C."/>
            <person name="Leyba T."/>
            <person name="Longmire J.L."/>
            <person name="Lopez F."/>
            <person name="Lou Y."/>
            <person name="Lowry S."/>
            <person name="Ludeman T."/>
            <person name="Manohar C.F."/>
            <person name="Mark G.A."/>
            <person name="McMurray K.L."/>
            <person name="Meincke L.J."/>
            <person name="Morgan J."/>
            <person name="Moyzis R.K."/>
            <person name="Mundt M.O."/>
            <person name="Munk A.C."/>
            <person name="Nandkeshwar R.D."/>
            <person name="Pitluck S."/>
            <person name="Pollard M."/>
            <person name="Predki P."/>
            <person name="Parson-Quintana B."/>
            <person name="Ramirez L."/>
            <person name="Rash S."/>
            <person name="Retterer J."/>
            <person name="Ricke D.O."/>
            <person name="Robinson D.L."/>
            <person name="Rodriguez A."/>
            <person name="Salamov A."/>
            <person name="Saunders E.H."/>
            <person name="Scott D."/>
            <person name="Shough T."/>
            <person name="Stallings R.L."/>
            <person name="Stalvey M."/>
            <person name="Sutherland R.D."/>
            <person name="Tapia R."/>
            <person name="Tesmer J.G."/>
            <person name="Thayer N."/>
            <person name="Thompson L.S."/>
            <person name="Tice H."/>
            <person name="Torney D.C."/>
            <person name="Tran-Gyamfi M."/>
            <person name="Tsai M."/>
            <person name="Ulanovsky L.E."/>
            <person name="Ustaszewska A."/>
            <person name="Vo N."/>
            <person name="White P.S."/>
            <person name="Williams A.L."/>
            <person name="Wills P.L."/>
            <person name="Wu J.-R."/>
            <person name="Wu K."/>
            <person name="Yang J."/>
            <person name="DeJong P."/>
            <person name="Bruce D."/>
            <person name="Doggett N.A."/>
            <person name="Deaven L."/>
            <person name="Schmutz J."/>
            <person name="Grimwood J."/>
            <person name="Richardson P."/>
            <person name="Rokhsar D.S."/>
            <person name="Eichler E.E."/>
            <person name="Gilna P."/>
            <person name="Lucas S.M."/>
            <person name="Myers R.M."/>
            <person name="Rubin E.M."/>
            <person name="Pennacchio L.A."/>
        </authorList>
    </citation>
    <scope>NUCLEOTIDE SEQUENCE [LARGE SCALE GENOMIC DNA]</scope>
</reference>
<reference key="3">
    <citation type="journal article" date="2004" name="Genome Res.">
        <title>The status, quality, and expansion of the NIH full-length cDNA project: the Mammalian Gene Collection (MGC).</title>
        <authorList>
            <consortium name="The MGC Project Team"/>
        </authorList>
    </citation>
    <scope>NUCLEOTIDE SEQUENCE [LARGE SCALE MRNA]</scope>
    <source>
        <tissue>Bone marrow</tissue>
        <tissue>Lung</tissue>
        <tissue>Ovary</tissue>
    </source>
</reference>
<reference key="4">
    <citation type="journal article" date="2008" name="Proc. Natl. Acad. Sci. U.S.A.">
        <title>A quantitative atlas of mitotic phosphorylation.</title>
        <authorList>
            <person name="Dephoure N."/>
            <person name="Zhou C."/>
            <person name="Villen J."/>
            <person name="Beausoleil S.A."/>
            <person name="Bakalarski C.E."/>
            <person name="Elledge S.J."/>
            <person name="Gygi S.P."/>
        </authorList>
    </citation>
    <scope>PHOSPHORYLATION [LARGE SCALE ANALYSIS] AT SER-282</scope>
    <scope>IDENTIFICATION BY MASS SPECTROMETRY [LARGE SCALE ANALYSIS]</scope>
    <source>
        <tissue>Cervix carcinoma</tissue>
    </source>
</reference>
<reference key="5">
    <citation type="journal article" date="2009" name="Sci. Signal.">
        <title>Quantitative phosphoproteomic analysis of T cell receptor signaling reveals system-wide modulation of protein-protein interactions.</title>
        <authorList>
            <person name="Mayya V."/>
            <person name="Lundgren D.H."/>
            <person name="Hwang S.-I."/>
            <person name="Rezaul K."/>
            <person name="Wu L."/>
            <person name="Eng J.K."/>
            <person name="Rodionov V."/>
            <person name="Han D.K."/>
        </authorList>
    </citation>
    <scope>PHOSPHORYLATION [LARGE SCALE ANALYSIS] AT SER-259; THR-261 AND SER-264</scope>
    <scope>IDENTIFICATION BY MASS SPECTROMETRY [LARGE SCALE ANALYSIS]</scope>
    <source>
        <tissue>Leukemic T-cell</tissue>
    </source>
</reference>
<reference key="6">
    <citation type="journal article" date="2011" name="BMC Syst. Biol.">
        <title>Initial characterization of the human central proteome.</title>
        <authorList>
            <person name="Burkard T.R."/>
            <person name="Planyavsky M."/>
            <person name="Kaupe I."/>
            <person name="Breitwieser F.P."/>
            <person name="Buerckstuemmer T."/>
            <person name="Bennett K.L."/>
            <person name="Superti-Furga G."/>
            <person name="Colinge J."/>
        </authorList>
    </citation>
    <scope>IDENTIFICATION BY MASS SPECTROMETRY [LARGE SCALE ANALYSIS]</scope>
</reference>
<reference key="7">
    <citation type="journal article" date="2016" name="Nucleic Acids Res.">
        <title>Ribosome biogenesis factor Tsr3 is the aminocarboxypropyl transferase responsible for 18S rRNA hypermodification in yeast and humans.</title>
        <authorList>
            <person name="Meyer B."/>
            <person name="Wurm J.P."/>
            <person name="Sharma S."/>
            <person name="Immer C."/>
            <person name="Pogoryelov D."/>
            <person name="Koetter P."/>
            <person name="Lafontaine D.L."/>
            <person name="Woehnert J."/>
            <person name="Entian K.D."/>
        </authorList>
    </citation>
    <scope>FUNCTION</scope>
    <scope>CATALYTIC ACTIVITY</scope>
</reference>
<keyword id="KW-0963">Cytoplasm</keyword>
<keyword id="KW-0597">Phosphoprotein</keyword>
<keyword id="KW-1267">Proteomics identification</keyword>
<keyword id="KW-1185">Reference proteome</keyword>
<keyword id="KW-0690">Ribosome biogenesis</keyword>
<keyword id="KW-0698">rRNA processing</keyword>
<keyword id="KW-0949">S-adenosyl-L-methionine</keyword>
<keyword id="KW-0808">Transferase</keyword>
<protein>
    <recommendedName>
        <fullName evidence="8">18S rRNA aminocarboxypropyltransferase</fullName>
        <ecNumber evidence="9">2.5.1.157</ecNumber>
    </recommendedName>
    <alternativeName>
        <fullName evidence="7">20S S rRNA accumulation protein 3 homolog</fullName>
        <shortName evidence="7">HsTsr3</shortName>
    </alternativeName>
</protein>
<dbReference type="EC" id="2.5.1.157" evidence="9"/>
<dbReference type="EMBL" id="AE006467">
    <property type="protein sequence ID" value="AAK61276.1"/>
    <property type="molecule type" value="Genomic_DNA"/>
</dbReference>
<dbReference type="EMBL" id="AL031709">
    <property type="status" value="NOT_ANNOTATED_CDS"/>
    <property type="molecule type" value="Genomic_DNA"/>
</dbReference>
<dbReference type="EMBL" id="BC013943">
    <property type="protein sequence ID" value="AAH13943.1"/>
    <property type="molecule type" value="mRNA"/>
</dbReference>
<dbReference type="EMBL" id="BC016699">
    <property type="protein sequence ID" value="AAH16699.1"/>
    <property type="molecule type" value="mRNA"/>
</dbReference>
<dbReference type="EMBL" id="BC017325">
    <property type="protein sequence ID" value="AAH17325.1"/>
    <property type="molecule type" value="mRNA"/>
</dbReference>
<dbReference type="CCDS" id="CCDS10435.1"/>
<dbReference type="PIR" id="T45061">
    <property type="entry name" value="T45061"/>
</dbReference>
<dbReference type="RefSeq" id="NP_001001410.1">
    <property type="nucleotide sequence ID" value="NM_001001410.3"/>
</dbReference>
<dbReference type="SMR" id="Q9UJK0"/>
<dbReference type="BioGRID" id="125462">
    <property type="interactions" value="66"/>
</dbReference>
<dbReference type="FunCoup" id="Q9UJK0">
    <property type="interactions" value="1500"/>
</dbReference>
<dbReference type="IntAct" id="Q9UJK0">
    <property type="interactions" value="39"/>
</dbReference>
<dbReference type="STRING" id="9606.ENSP00000007390"/>
<dbReference type="iPTMnet" id="Q9UJK0"/>
<dbReference type="PhosphoSitePlus" id="Q9UJK0"/>
<dbReference type="BioMuta" id="TSR3"/>
<dbReference type="DMDM" id="74753359"/>
<dbReference type="jPOST" id="Q9UJK0"/>
<dbReference type="MassIVE" id="Q9UJK0"/>
<dbReference type="PaxDb" id="9606-ENSP00000007390"/>
<dbReference type="PeptideAtlas" id="Q9UJK0"/>
<dbReference type="ProteomicsDB" id="84629"/>
<dbReference type="Pumba" id="Q9UJK0"/>
<dbReference type="Antibodypedia" id="52454">
    <property type="antibodies" value="21 antibodies from 10 providers"/>
</dbReference>
<dbReference type="DNASU" id="115939"/>
<dbReference type="Ensembl" id="ENST00000007390.3">
    <property type="protein sequence ID" value="ENSP00000007390.2"/>
    <property type="gene ID" value="ENSG00000007520.4"/>
</dbReference>
<dbReference type="GeneID" id="115939"/>
<dbReference type="KEGG" id="hsa:115939"/>
<dbReference type="MANE-Select" id="ENST00000007390.3">
    <property type="protein sequence ID" value="ENSP00000007390.2"/>
    <property type="RefSeq nucleotide sequence ID" value="NM_001001410.3"/>
    <property type="RefSeq protein sequence ID" value="NP_001001410.1"/>
</dbReference>
<dbReference type="UCSC" id="uc002cll.4">
    <property type="organism name" value="human"/>
</dbReference>
<dbReference type="AGR" id="HGNC:14175"/>
<dbReference type="CTD" id="115939"/>
<dbReference type="GeneCards" id="TSR3"/>
<dbReference type="HGNC" id="HGNC:14175">
    <property type="gene designation" value="TSR3"/>
</dbReference>
<dbReference type="HPA" id="ENSG00000007520">
    <property type="expression patterns" value="Low tissue specificity"/>
</dbReference>
<dbReference type="neXtProt" id="NX_Q9UJK0"/>
<dbReference type="OpenTargets" id="ENSG00000007520"/>
<dbReference type="PharmGKB" id="PA25558"/>
<dbReference type="VEuPathDB" id="HostDB:ENSG00000007520"/>
<dbReference type="eggNOG" id="KOG3154">
    <property type="taxonomic scope" value="Eukaryota"/>
</dbReference>
<dbReference type="GeneTree" id="ENSGT00390000014665"/>
<dbReference type="HOGENOM" id="CLU_035060_2_0_1"/>
<dbReference type="InParanoid" id="Q9UJK0"/>
<dbReference type="OMA" id="MVGTHPR"/>
<dbReference type="OrthoDB" id="10262062at2759"/>
<dbReference type="PAN-GO" id="Q9UJK0">
    <property type="GO annotations" value="1 GO annotation based on evolutionary models"/>
</dbReference>
<dbReference type="PhylomeDB" id="Q9UJK0"/>
<dbReference type="TreeFam" id="TF105862"/>
<dbReference type="PathwayCommons" id="Q9UJK0"/>
<dbReference type="Reactome" id="R-HSA-6790901">
    <property type="pathway name" value="rRNA modification in the nucleus and cytosol"/>
</dbReference>
<dbReference type="SignaLink" id="Q9UJK0"/>
<dbReference type="BioGRID-ORCS" id="115939">
    <property type="hits" value="61 hits in 1159 CRISPR screens"/>
</dbReference>
<dbReference type="ChiTaRS" id="TSR3">
    <property type="organism name" value="human"/>
</dbReference>
<dbReference type="GeneWiki" id="C16orf42"/>
<dbReference type="GenomeRNAi" id="115939"/>
<dbReference type="Pharos" id="Q9UJK0">
    <property type="development level" value="Tdark"/>
</dbReference>
<dbReference type="PRO" id="PR:Q9UJK0"/>
<dbReference type="Proteomes" id="UP000005640">
    <property type="component" value="Chromosome 16"/>
</dbReference>
<dbReference type="RNAct" id="Q9UJK0">
    <property type="molecule type" value="protein"/>
</dbReference>
<dbReference type="Bgee" id="ENSG00000007520">
    <property type="expression patterns" value="Expressed in tendon of biceps brachii and 205 other cell types or tissues"/>
</dbReference>
<dbReference type="ExpressionAtlas" id="Q9UJK0">
    <property type="expression patterns" value="baseline and differential"/>
</dbReference>
<dbReference type="GO" id="GO:0005829">
    <property type="term" value="C:cytosol"/>
    <property type="evidence" value="ECO:0000304"/>
    <property type="project" value="Reactome"/>
</dbReference>
<dbReference type="GO" id="GO:0106388">
    <property type="term" value="F:18S rRNA aminocarboxypropyltransferase activity"/>
    <property type="evidence" value="ECO:0000315"/>
    <property type="project" value="UniProtKB"/>
</dbReference>
<dbReference type="GO" id="GO:1904047">
    <property type="term" value="F:S-adenosyl-L-methionine binding"/>
    <property type="evidence" value="ECO:0007669"/>
    <property type="project" value="UniProtKB-UniRule"/>
</dbReference>
<dbReference type="GO" id="GO:0016740">
    <property type="term" value="F:transferase activity"/>
    <property type="evidence" value="ECO:0000269"/>
    <property type="project" value="Reactome"/>
</dbReference>
<dbReference type="GO" id="GO:0000455">
    <property type="term" value="P:enzyme-directed rRNA pseudouridine synthesis"/>
    <property type="evidence" value="ECO:0000315"/>
    <property type="project" value="UniProtKB"/>
</dbReference>
<dbReference type="GO" id="GO:0030490">
    <property type="term" value="P:maturation of SSU-rRNA"/>
    <property type="evidence" value="ECO:0000318"/>
    <property type="project" value="GO_Central"/>
</dbReference>
<dbReference type="GO" id="GO:0000154">
    <property type="term" value="P:rRNA modification"/>
    <property type="evidence" value="ECO:0000304"/>
    <property type="project" value="Reactome"/>
</dbReference>
<dbReference type="HAMAP" id="MF_01116">
    <property type="entry name" value="TSR3"/>
    <property type="match status" value="1"/>
</dbReference>
<dbReference type="InterPro" id="IPR007209">
    <property type="entry name" value="RNaseL-inhib-like_metal-bd_dom"/>
</dbReference>
<dbReference type="InterPro" id="IPR022968">
    <property type="entry name" value="Tsr3-like"/>
</dbReference>
<dbReference type="InterPro" id="IPR007177">
    <property type="entry name" value="Tsr3_C"/>
</dbReference>
<dbReference type="NCBIfam" id="NF002621">
    <property type="entry name" value="PRK02287.1"/>
    <property type="match status" value="1"/>
</dbReference>
<dbReference type="PANTHER" id="PTHR20426:SF0">
    <property type="entry name" value="18S RRNA AMINOCARBOXYPROPYLTRANSFERASE"/>
    <property type="match status" value="1"/>
</dbReference>
<dbReference type="PANTHER" id="PTHR20426">
    <property type="entry name" value="RIBOSOME BIOGENESIS PROTEIN TSR3 HOMOLOG"/>
    <property type="match status" value="1"/>
</dbReference>
<dbReference type="Pfam" id="PF04068">
    <property type="entry name" value="Fer4_RLI"/>
    <property type="match status" value="1"/>
</dbReference>
<dbReference type="Pfam" id="PF04034">
    <property type="entry name" value="Ribo_biogen_C"/>
    <property type="match status" value="1"/>
</dbReference>
<accession>Q9UJK0</accession>
<accession>Q6PJT8</accession>
<comment type="function">
    <text evidence="9">Aminocarboxypropyltransferase that catalyzes the aminocarboxypropyl transfer on pseudouridine at position 1248 (Psi1248) in 18S rRNA (Probable). It constitutes the last step in biosynthesis of the hypermodified N1-methyl-N3-(3-amino-3-carboxypropyl) pseudouridine (m1acp3-Psi) conserved in eukaryotic 18S rRNA (Probable).</text>
</comment>
<comment type="catalytic activity">
    <reaction evidence="4 9">
        <text>an N(1)-methylpseudouridine in rRNA + S-adenosyl-L-methionine = N(1)-methyl-N(3)-[(3S)-3-amino-3-carboxypropyl]pseudouridine in rRNA + S-methyl-5'-thioadenosine + H(+)</text>
        <dbReference type="Rhea" id="RHEA:63296"/>
        <dbReference type="Rhea" id="RHEA-COMP:11634"/>
        <dbReference type="Rhea" id="RHEA-COMP:16310"/>
        <dbReference type="ChEBI" id="CHEBI:15378"/>
        <dbReference type="ChEBI" id="CHEBI:17509"/>
        <dbReference type="ChEBI" id="CHEBI:59789"/>
        <dbReference type="ChEBI" id="CHEBI:74890"/>
        <dbReference type="ChEBI" id="CHEBI:146234"/>
        <dbReference type="EC" id="2.5.1.157"/>
    </reaction>
    <physiologicalReaction direction="left-to-right" evidence="4 9">
        <dbReference type="Rhea" id="RHEA:63297"/>
    </physiologicalReaction>
</comment>
<comment type="catalytic activity">
    <reaction evidence="4 9">
        <text>N(1)-methylpseudouridine(1248) in human 18S rRNA + S-adenosyl-L-methionine = N(1)-methyl-N(3)-[(3S)-3-amino-3-carboxypropyl]pseudouridine(1248) in human 18S rRNA + S-methyl-5'-thioadenosine + H(+)</text>
        <dbReference type="Rhea" id="RHEA:63292"/>
        <dbReference type="Rhea" id="RHEA-COMP:11639"/>
        <dbReference type="Rhea" id="RHEA-COMP:16308"/>
        <dbReference type="ChEBI" id="CHEBI:15378"/>
        <dbReference type="ChEBI" id="CHEBI:17509"/>
        <dbReference type="ChEBI" id="CHEBI:59789"/>
        <dbReference type="ChEBI" id="CHEBI:74890"/>
        <dbReference type="ChEBI" id="CHEBI:146234"/>
    </reaction>
    <physiologicalReaction direction="left-to-right" evidence="4 9">
        <dbReference type="Rhea" id="RHEA:63293"/>
    </physiologicalReaction>
</comment>
<comment type="subcellular location">
    <subcellularLocation>
        <location evidence="2 4">Cytoplasm</location>
    </subcellularLocation>
</comment>
<comment type="similarity">
    <text evidence="4">Belongs to the TDD superfamily. TSR3 family.</text>
</comment>
<proteinExistence type="evidence at protein level"/>